<sequence length="156" mass="17104">MNINLTLIGQSLTFIAFILFCMKYVWPQLIAMMEEREKRIAEGLEAADRADKDLELAQKKAGKQLTEAKEQAATIVEQANKRGNQIVEEAKEAAVAEGERIKAAAQAEIERQVAQAREELRGKVAALAIQGAEKVLGTTVDAKAHSEMLDKLAAEL</sequence>
<accession>Q21DK4</accession>
<reference key="1">
    <citation type="journal article" date="2008" name="PLoS Genet.">
        <title>Complete genome sequence of the complex carbohydrate-degrading marine bacterium, Saccharophagus degradans strain 2-40 T.</title>
        <authorList>
            <person name="Weiner R.M."/>
            <person name="Taylor L.E. II"/>
            <person name="Henrissat B."/>
            <person name="Hauser L."/>
            <person name="Land M."/>
            <person name="Coutinho P.M."/>
            <person name="Rancurel C."/>
            <person name="Saunders E.H."/>
            <person name="Longmire A.G."/>
            <person name="Zhang H."/>
            <person name="Bayer E.A."/>
            <person name="Gilbert H.J."/>
            <person name="Larimer F."/>
            <person name="Zhulin I.B."/>
            <person name="Ekborg N.A."/>
            <person name="Lamed R."/>
            <person name="Richardson P.M."/>
            <person name="Borovok I."/>
            <person name="Hutcheson S."/>
        </authorList>
    </citation>
    <scope>NUCLEOTIDE SEQUENCE [LARGE SCALE GENOMIC DNA]</scope>
    <source>
        <strain>2-40 / ATCC 43961 / DSM 17024</strain>
    </source>
</reference>
<protein>
    <recommendedName>
        <fullName evidence="1">ATP synthase subunit b</fullName>
    </recommendedName>
    <alternativeName>
        <fullName evidence="1">ATP synthase F(0) sector subunit b</fullName>
    </alternativeName>
    <alternativeName>
        <fullName evidence="1">ATPase subunit I</fullName>
    </alternativeName>
    <alternativeName>
        <fullName evidence="1">F-type ATPase subunit b</fullName>
        <shortName evidence="1">F-ATPase subunit b</shortName>
    </alternativeName>
</protein>
<gene>
    <name evidence="1" type="primary">atpF</name>
    <name type="ordered locus">Sde_3970</name>
</gene>
<proteinExistence type="inferred from homology"/>
<evidence type="ECO:0000255" key="1">
    <source>
        <dbReference type="HAMAP-Rule" id="MF_01398"/>
    </source>
</evidence>
<comment type="function">
    <text evidence="1">F(1)F(0) ATP synthase produces ATP from ADP in the presence of a proton or sodium gradient. F-type ATPases consist of two structural domains, F(1) containing the extramembraneous catalytic core and F(0) containing the membrane proton channel, linked together by a central stalk and a peripheral stalk. During catalysis, ATP synthesis in the catalytic domain of F(1) is coupled via a rotary mechanism of the central stalk subunits to proton translocation.</text>
</comment>
<comment type="function">
    <text evidence="1">Component of the F(0) channel, it forms part of the peripheral stalk, linking F(1) to F(0).</text>
</comment>
<comment type="subunit">
    <text evidence="1">F-type ATPases have 2 components, F(1) - the catalytic core - and F(0) - the membrane proton channel. F(1) has five subunits: alpha(3), beta(3), gamma(1), delta(1), epsilon(1). F(0) has three main subunits: a(1), b(2) and c(10-14). The alpha and beta chains form an alternating ring which encloses part of the gamma chain. F(1) is attached to F(0) by a central stalk formed by the gamma and epsilon chains, while a peripheral stalk is formed by the delta and b chains.</text>
</comment>
<comment type="subcellular location">
    <subcellularLocation>
        <location evidence="1">Cell inner membrane</location>
        <topology evidence="1">Single-pass membrane protein</topology>
    </subcellularLocation>
</comment>
<comment type="similarity">
    <text evidence="1">Belongs to the ATPase B chain family.</text>
</comment>
<keyword id="KW-0066">ATP synthesis</keyword>
<keyword id="KW-0997">Cell inner membrane</keyword>
<keyword id="KW-1003">Cell membrane</keyword>
<keyword id="KW-0138">CF(0)</keyword>
<keyword id="KW-0375">Hydrogen ion transport</keyword>
<keyword id="KW-0406">Ion transport</keyword>
<keyword id="KW-0472">Membrane</keyword>
<keyword id="KW-1185">Reference proteome</keyword>
<keyword id="KW-0812">Transmembrane</keyword>
<keyword id="KW-1133">Transmembrane helix</keyword>
<keyword id="KW-0813">Transport</keyword>
<organism>
    <name type="scientific">Saccharophagus degradans (strain 2-40 / ATCC 43961 / DSM 17024)</name>
    <dbReference type="NCBI Taxonomy" id="203122"/>
    <lineage>
        <taxon>Bacteria</taxon>
        <taxon>Pseudomonadati</taxon>
        <taxon>Pseudomonadota</taxon>
        <taxon>Gammaproteobacteria</taxon>
        <taxon>Cellvibrionales</taxon>
        <taxon>Cellvibrionaceae</taxon>
        <taxon>Saccharophagus</taxon>
    </lineage>
</organism>
<dbReference type="EMBL" id="CP000282">
    <property type="protein sequence ID" value="ABD83225.1"/>
    <property type="molecule type" value="Genomic_DNA"/>
</dbReference>
<dbReference type="RefSeq" id="WP_011470440.1">
    <property type="nucleotide sequence ID" value="NC_007912.1"/>
</dbReference>
<dbReference type="SMR" id="Q21DK4"/>
<dbReference type="STRING" id="203122.Sde_3970"/>
<dbReference type="GeneID" id="98615563"/>
<dbReference type="KEGG" id="sde:Sde_3970"/>
<dbReference type="eggNOG" id="COG0711">
    <property type="taxonomic scope" value="Bacteria"/>
</dbReference>
<dbReference type="HOGENOM" id="CLU_079215_4_5_6"/>
<dbReference type="OrthoDB" id="9788020at2"/>
<dbReference type="Proteomes" id="UP000001947">
    <property type="component" value="Chromosome"/>
</dbReference>
<dbReference type="GO" id="GO:0005886">
    <property type="term" value="C:plasma membrane"/>
    <property type="evidence" value="ECO:0007669"/>
    <property type="project" value="UniProtKB-SubCell"/>
</dbReference>
<dbReference type="GO" id="GO:0045259">
    <property type="term" value="C:proton-transporting ATP synthase complex"/>
    <property type="evidence" value="ECO:0007669"/>
    <property type="project" value="UniProtKB-KW"/>
</dbReference>
<dbReference type="GO" id="GO:0046933">
    <property type="term" value="F:proton-transporting ATP synthase activity, rotational mechanism"/>
    <property type="evidence" value="ECO:0007669"/>
    <property type="project" value="UniProtKB-UniRule"/>
</dbReference>
<dbReference type="GO" id="GO:0046961">
    <property type="term" value="F:proton-transporting ATPase activity, rotational mechanism"/>
    <property type="evidence" value="ECO:0007669"/>
    <property type="project" value="TreeGrafter"/>
</dbReference>
<dbReference type="CDD" id="cd06503">
    <property type="entry name" value="ATP-synt_Fo_b"/>
    <property type="match status" value="1"/>
</dbReference>
<dbReference type="Gene3D" id="6.10.250.1580">
    <property type="match status" value="1"/>
</dbReference>
<dbReference type="HAMAP" id="MF_01398">
    <property type="entry name" value="ATP_synth_b_bprime"/>
    <property type="match status" value="1"/>
</dbReference>
<dbReference type="InterPro" id="IPR028987">
    <property type="entry name" value="ATP_synth_B-like_membr_sf"/>
</dbReference>
<dbReference type="InterPro" id="IPR002146">
    <property type="entry name" value="ATP_synth_b/b'su_bac/chlpt"/>
</dbReference>
<dbReference type="InterPro" id="IPR005864">
    <property type="entry name" value="ATP_synth_F0_bsu_bac"/>
</dbReference>
<dbReference type="InterPro" id="IPR050059">
    <property type="entry name" value="ATP_synthase_B_chain"/>
</dbReference>
<dbReference type="NCBIfam" id="TIGR01144">
    <property type="entry name" value="ATP_synt_b"/>
    <property type="match status" value="1"/>
</dbReference>
<dbReference type="NCBIfam" id="NF004411">
    <property type="entry name" value="PRK05759.1-2"/>
    <property type="match status" value="1"/>
</dbReference>
<dbReference type="PANTHER" id="PTHR33445:SF1">
    <property type="entry name" value="ATP SYNTHASE SUBUNIT B"/>
    <property type="match status" value="1"/>
</dbReference>
<dbReference type="PANTHER" id="PTHR33445">
    <property type="entry name" value="ATP SYNTHASE SUBUNIT B', CHLOROPLASTIC"/>
    <property type="match status" value="1"/>
</dbReference>
<dbReference type="Pfam" id="PF00430">
    <property type="entry name" value="ATP-synt_B"/>
    <property type="match status" value="1"/>
</dbReference>
<dbReference type="SUPFAM" id="SSF81573">
    <property type="entry name" value="F1F0 ATP synthase subunit B, membrane domain"/>
    <property type="match status" value="1"/>
</dbReference>
<name>ATPF_SACD2</name>
<feature type="chain" id="PRO_0000368734" description="ATP synthase subunit b">
    <location>
        <begin position="1"/>
        <end position="156"/>
    </location>
</feature>
<feature type="transmembrane region" description="Helical" evidence="1">
    <location>
        <begin position="7"/>
        <end position="29"/>
    </location>
</feature>